<gene>
    <name evidence="1" type="primary">hemL1</name>
    <name type="ordered locus">BPUM_0825</name>
</gene>
<comment type="catalytic activity">
    <reaction evidence="1">
        <text>(S)-4-amino-5-oxopentanoate = 5-aminolevulinate</text>
        <dbReference type="Rhea" id="RHEA:14265"/>
        <dbReference type="ChEBI" id="CHEBI:57501"/>
        <dbReference type="ChEBI" id="CHEBI:356416"/>
        <dbReference type="EC" id="5.4.3.8"/>
    </reaction>
</comment>
<comment type="cofactor">
    <cofactor evidence="1">
        <name>pyridoxal 5'-phosphate</name>
        <dbReference type="ChEBI" id="CHEBI:597326"/>
    </cofactor>
</comment>
<comment type="pathway">
    <text evidence="1">Porphyrin-containing compound metabolism; protoporphyrin-IX biosynthesis; 5-aminolevulinate from L-glutamyl-tRNA(Glu): step 2/2.</text>
</comment>
<comment type="subunit">
    <text evidence="1">Homodimer.</text>
</comment>
<comment type="subcellular location">
    <subcellularLocation>
        <location evidence="1">Cytoplasm</location>
    </subcellularLocation>
</comment>
<comment type="similarity">
    <text evidence="1">Belongs to the class-III pyridoxal-phosphate-dependent aminotransferase family. HemL subfamily.</text>
</comment>
<sequence length="431" mass="46615">MKFTESEKLHQEALEHIVGGVNSPSRSYKAVGGGSPVAMEKGEGAYFWDVDGNRYIDYLAAYGPIITGHAHPHITKAITKAAESGVLYGTPTKHEVTFAKMLKEAMPALDKVRFVNSGTEAVMTTIRVARAYTGRTKIIKFAGCYHGHSDLVLVAAGSGPSTLGTPDSAGVPKSIANEVITVPFNDIDSYKEALDRWGDEVAAVLVEPIVGNFGIVEPKDGFLQQVNDLTHEKGALVIYDEVITAFRFMYGGAQDLLQVKPDLTALGKIIGGGLPIGAYGGKKEIMEQVAPLGPAYQAGTMAGNPASILSGIACLEVLKQDGVYERLDQLGAMLEEGILAHAKKHQVDITVNRLKGALTVYFTKETIVNYEQAENTDGEMFARFFKLMLSQGINLAPSKYEAWFLTIAHTEKDISETLQAVDRAFEQLKQS</sequence>
<keyword id="KW-0963">Cytoplasm</keyword>
<keyword id="KW-0413">Isomerase</keyword>
<keyword id="KW-0627">Porphyrin biosynthesis</keyword>
<keyword id="KW-0663">Pyridoxal phosphate</keyword>
<proteinExistence type="inferred from homology"/>
<name>GSA1_BACP2</name>
<reference key="1">
    <citation type="journal article" date="2007" name="PLoS ONE">
        <title>Paradoxical DNA repair and peroxide resistance gene conservation in Bacillus pumilus SAFR-032.</title>
        <authorList>
            <person name="Gioia J."/>
            <person name="Yerrapragada S."/>
            <person name="Qin X."/>
            <person name="Jiang H."/>
            <person name="Igboeli O.C."/>
            <person name="Muzny D."/>
            <person name="Dugan-Rocha S."/>
            <person name="Ding Y."/>
            <person name="Hawes A."/>
            <person name="Liu W."/>
            <person name="Perez L."/>
            <person name="Kovar C."/>
            <person name="Dinh H."/>
            <person name="Lee S."/>
            <person name="Nazareth L."/>
            <person name="Blyth P."/>
            <person name="Holder M."/>
            <person name="Buhay C."/>
            <person name="Tirumalai M.R."/>
            <person name="Liu Y."/>
            <person name="Dasgupta I."/>
            <person name="Bokhetache L."/>
            <person name="Fujita M."/>
            <person name="Karouia F."/>
            <person name="Eswara Moorthy P."/>
            <person name="Siefert J."/>
            <person name="Uzman A."/>
            <person name="Buzumbo P."/>
            <person name="Verma A."/>
            <person name="Zwiya H."/>
            <person name="McWilliams B.D."/>
            <person name="Olowu A."/>
            <person name="Clinkenbeard K.D."/>
            <person name="Newcombe D."/>
            <person name="Golebiewski L."/>
            <person name="Petrosino J.F."/>
            <person name="Nicholson W.L."/>
            <person name="Fox G.E."/>
            <person name="Venkateswaran K."/>
            <person name="Highlander S.K."/>
            <person name="Weinstock G.M."/>
        </authorList>
    </citation>
    <scope>NUCLEOTIDE SEQUENCE [LARGE SCALE GENOMIC DNA]</scope>
    <source>
        <strain>SAFR-032</strain>
    </source>
</reference>
<evidence type="ECO:0000255" key="1">
    <source>
        <dbReference type="HAMAP-Rule" id="MF_00375"/>
    </source>
</evidence>
<protein>
    <recommendedName>
        <fullName evidence="1">Glutamate-1-semialdehyde 2,1-aminomutase 1</fullName>
        <shortName evidence="1">GSA 1</shortName>
        <ecNumber evidence="1">5.4.3.8</ecNumber>
    </recommendedName>
    <alternativeName>
        <fullName evidence="1">Glutamate-1-semialdehyde aminotransferase 1</fullName>
        <shortName evidence="1">GSA-AT 1</shortName>
    </alternativeName>
</protein>
<feature type="chain" id="PRO_0000382277" description="Glutamate-1-semialdehyde 2,1-aminomutase 1">
    <location>
        <begin position="1"/>
        <end position="431"/>
    </location>
</feature>
<feature type="modified residue" description="N6-(pyridoxal phosphate)lysine" evidence="1">
    <location>
        <position position="268"/>
    </location>
</feature>
<organism>
    <name type="scientific">Bacillus pumilus (strain SAFR-032)</name>
    <dbReference type="NCBI Taxonomy" id="315750"/>
    <lineage>
        <taxon>Bacteria</taxon>
        <taxon>Bacillati</taxon>
        <taxon>Bacillota</taxon>
        <taxon>Bacilli</taxon>
        <taxon>Bacillales</taxon>
        <taxon>Bacillaceae</taxon>
        <taxon>Bacillus</taxon>
    </lineage>
</organism>
<dbReference type="EC" id="5.4.3.8" evidence="1"/>
<dbReference type="EMBL" id="CP000813">
    <property type="protein sequence ID" value="ABV61509.1"/>
    <property type="molecule type" value="Genomic_DNA"/>
</dbReference>
<dbReference type="RefSeq" id="WP_012009345.1">
    <property type="nucleotide sequence ID" value="NZ_VEIS01000018.1"/>
</dbReference>
<dbReference type="SMR" id="A8FB92"/>
<dbReference type="STRING" id="315750.BPUM_0825"/>
<dbReference type="GeneID" id="5620070"/>
<dbReference type="KEGG" id="bpu:BPUM_0825"/>
<dbReference type="eggNOG" id="COG0001">
    <property type="taxonomic scope" value="Bacteria"/>
</dbReference>
<dbReference type="HOGENOM" id="CLU_016922_1_5_9"/>
<dbReference type="OrthoDB" id="9807885at2"/>
<dbReference type="UniPathway" id="UPA00251">
    <property type="reaction ID" value="UER00317"/>
</dbReference>
<dbReference type="Proteomes" id="UP000001355">
    <property type="component" value="Chromosome"/>
</dbReference>
<dbReference type="GO" id="GO:0005737">
    <property type="term" value="C:cytoplasm"/>
    <property type="evidence" value="ECO:0007669"/>
    <property type="project" value="UniProtKB-SubCell"/>
</dbReference>
<dbReference type="GO" id="GO:0042286">
    <property type="term" value="F:glutamate-1-semialdehyde 2,1-aminomutase activity"/>
    <property type="evidence" value="ECO:0007669"/>
    <property type="project" value="UniProtKB-UniRule"/>
</dbReference>
<dbReference type="GO" id="GO:0030170">
    <property type="term" value="F:pyridoxal phosphate binding"/>
    <property type="evidence" value="ECO:0007669"/>
    <property type="project" value="InterPro"/>
</dbReference>
<dbReference type="GO" id="GO:0008483">
    <property type="term" value="F:transaminase activity"/>
    <property type="evidence" value="ECO:0007669"/>
    <property type="project" value="InterPro"/>
</dbReference>
<dbReference type="GO" id="GO:0006782">
    <property type="term" value="P:protoporphyrinogen IX biosynthetic process"/>
    <property type="evidence" value="ECO:0007669"/>
    <property type="project" value="UniProtKB-UniRule"/>
</dbReference>
<dbReference type="CDD" id="cd00610">
    <property type="entry name" value="OAT_like"/>
    <property type="match status" value="1"/>
</dbReference>
<dbReference type="FunFam" id="3.40.640.10:FF:000021">
    <property type="entry name" value="Glutamate-1-semialdehyde 2,1-aminomutase"/>
    <property type="match status" value="1"/>
</dbReference>
<dbReference type="Gene3D" id="3.90.1150.10">
    <property type="entry name" value="Aspartate Aminotransferase, domain 1"/>
    <property type="match status" value="1"/>
</dbReference>
<dbReference type="Gene3D" id="3.40.640.10">
    <property type="entry name" value="Type I PLP-dependent aspartate aminotransferase-like (Major domain)"/>
    <property type="match status" value="1"/>
</dbReference>
<dbReference type="HAMAP" id="MF_00375">
    <property type="entry name" value="HemL_aminotrans_3"/>
    <property type="match status" value="1"/>
</dbReference>
<dbReference type="InterPro" id="IPR004639">
    <property type="entry name" value="4pyrrol_synth_GluAld_NH2Trfase"/>
</dbReference>
<dbReference type="InterPro" id="IPR005814">
    <property type="entry name" value="Aminotrans_3"/>
</dbReference>
<dbReference type="InterPro" id="IPR049704">
    <property type="entry name" value="Aminotrans_3_PPA_site"/>
</dbReference>
<dbReference type="InterPro" id="IPR015424">
    <property type="entry name" value="PyrdxlP-dep_Trfase"/>
</dbReference>
<dbReference type="InterPro" id="IPR015421">
    <property type="entry name" value="PyrdxlP-dep_Trfase_major"/>
</dbReference>
<dbReference type="InterPro" id="IPR015422">
    <property type="entry name" value="PyrdxlP-dep_Trfase_small"/>
</dbReference>
<dbReference type="NCBIfam" id="TIGR00713">
    <property type="entry name" value="hemL"/>
    <property type="match status" value="1"/>
</dbReference>
<dbReference type="NCBIfam" id="NF000818">
    <property type="entry name" value="PRK00062.1"/>
    <property type="match status" value="1"/>
</dbReference>
<dbReference type="NCBIfam" id="NF009055">
    <property type="entry name" value="PRK12389.1"/>
    <property type="match status" value="1"/>
</dbReference>
<dbReference type="PANTHER" id="PTHR43713">
    <property type="entry name" value="GLUTAMATE-1-SEMIALDEHYDE 2,1-AMINOMUTASE"/>
    <property type="match status" value="1"/>
</dbReference>
<dbReference type="PANTHER" id="PTHR43713:SF1">
    <property type="entry name" value="GLUTAMATE-1-SEMIALDEHYDE 2,1-AMINOMUTASE 2"/>
    <property type="match status" value="1"/>
</dbReference>
<dbReference type="Pfam" id="PF00202">
    <property type="entry name" value="Aminotran_3"/>
    <property type="match status" value="1"/>
</dbReference>
<dbReference type="SUPFAM" id="SSF53383">
    <property type="entry name" value="PLP-dependent transferases"/>
    <property type="match status" value="1"/>
</dbReference>
<dbReference type="PROSITE" id="PS00600">
    <property type="entry name" value="AA_TRANSFER_CLASS_3"/>
    <property type="match status" value="1"/>
</dbReference>
<accession>A8FB92</accession>